<feature type="chain" id="PRO_0000249512" description="Centromere protein R">
    <location>
        <begin position="1"/>
        <end position="176"/>
    </location>
</feature>
<feature type="region of interest" description="DD1" evidence="1">
    <location>
        <begin position="20"/>
        <end position="50"/>
    </location>
</feature>
<feature type="region of interest" description="Disordered" evidence="5">
    <location>
        <begin position="34"/>
        <end position="80"/>
    </location>
</feature>
<feature type="coiled-coil region" evidence="4">
    <location>
        <begin position="82"/>
        <end position="112"/>
    </location>
</feature>
<feature type="short sequence motif" description="Nuclear localization signal" evidence="1">
    <location>
        <begin position="63"/>
        <end position="66"/>
    </location>
</feature>
<feature type="short sequence motif" description="LXXLL motif">
    <location>
        <begin position="118"/>
        <end position="122"/>
    </location>
</feature>
<feature type="short sequence motif" description="LXXIL motif">
    <location>
        <begin position="171"/>
        <end position="175"/>
    </location>
</feature>
<feature type="compositionally biased region" description="Polar residues" evidence="5">
    <location>
        <begin position="34"/>
        <end position="48"/>
    </location>
</feature>
<feature type="compositionally biased region" description="Basic and acidic residues" evidence="5">
    <location>
        <begin position="49"/>
        <end position="58"/>
    </location>
</feature>
<feature type="compositionally biased region" description="Polar residues" evidence="5">
    <location>
        <begin position="60"/>
        <end position="80"/>
    </location>
</feature>
<feature type="modified residue" description="Phosphoserine" evidence="2">
    <location>
        <position position="17"/>
    </location>
</feature>
<feature type="modified residue" description="Phosphoserine" evidence="2">
    <location>
        <position position="28"/>
    </location>
</feature>
<feature type="modified residue" description="Phosphoserine" evidence="2">
    <location>
        <position position="71"/>
    </location>
</feature>
<feature type="cross-link" description="Glycyl lysine isopeptide (Lys-Gly) (interchain with G-Cter in SUMO2)" evidence="2">
    <location>
        <position position="8"/>
    </location>
</feature>
<feature type="cross-link" description="Glycyl lysine isopeptide (Lys-Gly) (interchain with G-Cter in SUMO2)" evidence="2">
    <location>
        <position position="22"/>
    </location>
</feature>
<gene>
    <name type="primary">Itgb3bp</name>
    <name type="synonym">Cenpr</name>
    <name type="synonym">Nrif3</name>
</gene>
<reference key="1">
    <citation type="journal article" date="2004" name="Genome Res.">
        <title>The status, quality, and expansion of the NIH full-length cDNA project: the Mammalian Gene Collection (MGC).</title>
        <authorList>
            <consortium name="The MGC Project Team"/>
        </authorList>
    </citation>
    <scope>NUCLEOTIDE SEQUENCE [LARGE SCALE MRNA]</scope>
    <source>
        <tissue>Ovary</tissue>
    </source>
</reference>
<reference key="2">
    <citation type="journal article" date="2012" name="Nat. Commun.">
        <title>Quantitative maps of protein phosphorylation sites across 14 different rat organs and tissues.</title>
        <authorList>
            <person name="Lundby A."/>
            <person name="Secher A."/>
            <person name="Lage K."/>
            <person name="Nordsborg N.B."/>
            <person name="Dmytriyev A."/>
            <person name="Lundby C."/>
            <person name="Olsen J.V."/>
        </authorList>
    </citation>
    <scope>IDENTIFICATION BY MASS SPECTROMETRY [LARGE SCALE ANALYSIS]</scope>
</reference>
<evidence type="ECO:0000250" key="1"/>
<evidence type="ECO:0000250" key="2">
    <source>
        <dbReference type="UniProtKB" id="Q13352"/>
    </source>
</evidence>
<evidence type="ECO:0000250" key="3">
    <source>
        <dbReference type="UniProtKB" id="Q9CQ82"/>
    </source>
</evidence>
<evidence type="ECO:0000255" key="4"/>
<evidence type="ECO:0000256" key="5">
    <source>
        <dbReference type="SAM" id="MobiDB-lite"/>
    </source>
</evidence>
<sequence length="176" mass="19917">MPVKRSLKLDDQFEENSFGPSKIMRKKSITAFSPTTGTYQLSPFSSPRTPKEQEHRDGPSNGTRKWSVLSSPARQDSTVKGSDGFMMLLSKIERSSEKTMEIMKNLSSLQALEGNRQLEDLLGVSLVPCSLKSEAKKTKELMTKVMKQKLFEKKNSRIPPKEHHPNSFEFLKAILN</sequence>
<proteinExistence type="evidence at protein level"/>
<keyword id="KW-0010">Activator</keyword>
<keyword id="KW-0053">Apoptosis</keyword>
<keyword id="KW-0131">Cell cycle</keyword>
<keyword id="KW-0132">Cell division</keyword>
<keyword id="KW-0137">Centromere</keyword>
<keyword id="KW-0158">Chromosome</keyword>
<keyword id="KW-0175">Coiled coil</keyword>
<keyword id="KW-1017">Isopeptide bond</keyword>
<keyword id="KW-0995">Kinetochore</keyword>
<keyword id="KW-0498">Mitosis</keyword>
<keyword id="KW-0539">Nucleus</keyword>
<keyword id="KW-0597">Phosphoprotein</keyword>
<keyword id="KW-1185">Reference proteome</keyword>
<keyword id="KW-0678">Repressor</keyword>
<keyword id="KW-0804">Transcription</keyword>
<keyword id="KW-0805">Transcription regulation</keyword>
<keyword id="KW-0832">Ubl conjugation</keyword>
<protein>
    <recommendedName>
        <fullName>Centromere protein R</fullName>
        <shortName>CENP-R</shortName>
    </recommendedName>
    <alternativeName>
        <fullName>Nuclear receptor-interacting factor 3</fullName>
    </alternativeName>
</protein>
<organism>
    <name type="scientific">Rattus norvegicus</name>
    <name type="common">Rat</name>
    <dbReference type="NCBI Taxonomy" id="10116"/>
    <lineage>
        <taxon>Eukaryota</taxon>
        <taxon>Metazoa</taxon>
        <taxon>Chordata</taxon>
        <taxon>Craniata</taxon>
        <taxon>Vertebrata</taxon>
        <taxon>Euteleostomi</taxon>
        <taxon>Mammalia</taxon>
        <taxon>Eutheria</taxon>
        <taxon>Euarchontoglires</taxon>
        <taxon>Glires</taxon>
        <taxon>Rodentia</taxon>
        <taxon>Myomorpha</taxon>
        <taxon>Muroidea</taxon>
        <taxon>Muridae</taxon>
        <taxon>Murinae</taxon>
        <taxon>Rattus</taxon>
    </lineage>
</organism>
<name>CENPR_RAT</name>
<accession>Q5U1Z7</accession>
<dbReference type="EMBL" id="BC086363">
    <property type="protein sequence ID" value="AAH86363.1"/>
    <property type="molecule type" value="mRNA"/>
</dbReference>
<dbReference type="RefSeq" id="NP_001013231.1">
    <property type="nucleotide sequence ID" value="NM_001013213.1"/>
</dbReference>
<dbReference type="SMR" id="Q5U1Z7"/>
<dbReference type="FunCoup" id="Q5U1Z7">
    <property type="interactions" value="712"/>
</dbReference>
<dbReference type="STRING" id="10116.ENSRNOP00000012947"/>
<dbReference type="iPTMnet" id="Q5U1Z7"/>
<dbReference type="PhosphoSitePlus" id="Q5U1Z7"/>
<dbReference type="PaxDb" id="10116-ENSRNOP00000012947"/>
<dbReference type="GeneID" id="362548"/>
<dbReference type="KEGG" id="rno:362548"/>
<dbReference type="UCSC" id="RGD:1310044">
    <property type="organism name" value="rat"/>
</dbReference>
<dbReference type="AGR" id="RGD:1310044"/>
<dbReference type="CTD" id="23421"/>
<dbReference type="RGD" id="1310044">
    <property type="gene designation" value="Itgb3bp"/>
</dbReference>
<dbReference type="VEuPathDB" id="HostDB:ENSRNOG00000009116"/>
<dbReference type="eggNOG" id="ENOG502S4AR">
    <property type="taxonomic scope" value="Eukaryota"/>
</dbReference>
<dbReference type="HOGENOM" id="CLU_122442_0_0_1"/>
<dbReference type="InParanoid" id="Q5U1Z7"/>
<dbReference type="PhylomeDB" id="Q5U1Z7"/>
<dbReference type="TreeFam" id="TF336291"/>
<dbReference type="Reactome" id="R-RNO-141444">
    <property type="pathway name" value="Amplification of signal from unattached kinetochores via a MAD2 inhibitory signal"/>
</dbReference>
<dbReference type="Reactome" id="R-RNO-205043">
    <property type="pathway name" value="NRIF signals cell death from the nucleus"/>
</dbReference>
<dbReference type="Reactome" id="R-RNO-2467813">
    <property type="pathway name" value="Separation of Sister Chromatids"/>
</dbReference>
<dbReference type="Reactome" id="R-RNO-2500257">
    <property type="pathway name" value="Resolution of Sister Chromatid Cohesion"/>
</dbReference>
<dbReference type="Reactome" id="R-RNO-5663220">
    <property type="pathway name" value="RHO GTPases Activate Formins"/>
</dbReference>
<dbReference type="Reactome" id="R-RNO-606279">
    <property type="pathway name" value="Deposition of new CENPA-containing nucleosomes at the centromere"/>
</dbReference>
<dbReference type="Reactome" id="R-RNO-68877">
    <property type="pathway name" value="Mitotic Prometaphase"/>
</dbReference>
<dbReference type="Reactome" id="R-RNO-9648025">
    <property type="pathway name" value="EML4 and NUDC in mitotic spindle formation"/>
</dbReference>
<dbReference type="PRO" id="PR:Q5U1Z7"/>
<dbReference type="Proteomes" id="UP000002494">
    <property type="component" value="Chromosome 5"/>
</dbReference>
<dbReference type="Bgee" id="ENSRNOG00000009116">
    <property type="expression patterns" value="Expressed in testis and 20 other cell types or tissues"/>
</dbReference>
<dbReference type="ExpressionAtlas" id="Q5U1Z7">
    <property type="expression patterns" value="baseline and differential"/>
</dbReference>
<dbReference type="GO" id="GO:0000939">
    <property type="term" value="C:inner kinetochore"/>
    <property type="evidence" value="ECO:0000266"/>
    <property type="project" value="RGD"/>
</dbReference>
<dbReference type="GO" id="GO:0000776">
    <property type="term" value="C:kinetochore"/>
    <property type="evidence" value="ECO:0000266"/>
    <property type="project" value="RGD"/>
</dbReference>
<dbReference type="GO" id="GO:0005654">
    <property type="term" value="C:nucleoplasm"/>
    <property type="evidence" value="ECO:0000318"/>
    <property type="project" value="GO_Central"/>
</dbReference>
<dbReference type="GO" id="GO:0006915">
    <property type="term" value="P:apoptotic process"/>
    <property type="evidence" value="ECO:0007669"/>
    <property type="project" value="UniProtKB-KW"/>
</dbReference>
<dbReference type="GO" id="GO:0051301">
    <property type="term" value="P:cell division"/>
    <property type="evidence" value="ECO:0007669"/>
    <property type="project" value="UniProtKB-KW"/>
</dbReference>
<dbReference type="GO" id="GO:0034080">
    <property type="term" value="P:CENP-A containing chromatin assembly"/>
    <property type="evidence" value="ECO:0007669"/>
    <property type="project" value="InterPro"/>
</dbReference>
<dbReference type="GO" id="GO:1904036">
    <property type="term" value="P:negative regulation of epithelial cell apoptotic process"/>
    <property type="evidence" value="ECO:0000266"/>
    <property type="project" value="RGD"/>
</dbReference>
<dbReference type="GO" id="GO:0050679">
    <property type="term" value="P:positive regulation of epithelial cell proliferation"/>
    <property type="evidence" value="ECO:0000266"/>
    <property type="project" value="RGD"/>
</dbReference>
<dbReference type="GO" id="GO:0006355">
    <property type="term" value="P:regulation of DNA-templated transcription"/>
    <property type="evidence" value="ECO:0007669"/>
    <property type="project" value="InterPro"/>
</dbReference>
<dbReference type="InterPro" id="IPR009601">
    <property type="entry name" value="CENP-R"/>
</dbReference>
<dbReference type="PANTHER" id="PTHR15581">
    <property type="entry name" value="CENTROMERE PROTEIN R"/>
    <property type="match status" value="1"/>
</dbReference>
<dbReference type="PANTHER" id="PTHR15581:SF0">
    <property type="entry name" value="CENTROMERE PROTEIN R"/>
    <property type="match status" value="1"/>
</dbReference>
<dbReference type="Pfam" id="PF06729">
    <property type="entry name" value="CENP-R"/>
    <property type="match status" value="1"/>
</dbReference>
<dbReference type="PIRSF" id="PIRSF011860">
    <property type="entry name" value="NRIF3_coact_rcpt"/>
    <property type="match status" value="1"/>
</dbReference>
<comment type="function">
    <text evidence="1">Transcription coregulator that can have both coactivator and corepressor functions. Involved in the coactivation of nuclear receptors for retinoid X (RXRs) and thyroid hormone (TRs) in a ligand-dependent fashion. In contrast, it does not coactivate nuclear receptors for retinoic acid, vitamin D, progesterone receptor, nor glucocorticoid. Acts as a coactivator for estrogen receptor alpha. Acts as a transcriptional corepressor via its interaction with the NFKB1 NF-kappa-B subunit, possibly by interfering with the transactivation domain of NFKB1. Induces apoptosis in breast cancer cells, but not in other cancer cells, via a caspase-2 mediated pathway that involves mitochondrial membrane permeabilization but does not require other caspases. May also act as an inhibitor of cyclin A-associated kinase. Also acts a component of the CENPA-CAD (nucleosome distal) complex, a complex recruited to centromeres which is involved in assembly of kinetochore proteins, mitotic progression and chromosome segregation. May be involved in incorporation of newly synthesized CENPA into centromeres via its interaction with the CENPA-NAC complex (By similarity).</text>
</comment>
<comment type="subunit">
    <text evidence="2 3">Homodimer; mediated by the coiled coil domain. Interacts with CCNA2 and MTA1. Interacts with NFKB1 NF-kappa-B subunit. Component of the CENPA-CAD complex, composed of CENPI, CENPK, CENPL, CENPO, CENPP, CENPQ, CENPR and CENPS. The CENPA-CAD complex interacts with the CENPA-NAC complex, at least composed of CENPA, CENPC, CENPH, CENPM, CENPN, CENPT and CENPU (By similarity). Interacts with TASOR (By similarity).</text>
</comment>
<comment type="subcellular location">
    <subcellularLocation>
        <location evidence="1">Nucleus</location>
    </subcellularLocation>
    <subcellularLocation>
        <location evidence="1">Chromosome</location>
        <location evidence="1">Centromere</location>
    </subcellularLocation>
    <subcellularLocation>
        <location evidence="1">Chromosome</location>
        <location evidence="1">Centromere</location>
        <location evidence="1">Kinetochore</location>
    </subcellularLocation>
</comment>
<comment type="domain">
    <text evidence="1">The DD1 domain (also called RepD1 domain) mediates the corepressor function and is essential in the triggering of apoptosis.</text>
</comment>
<comment type="domain">
    <text evidence="1">Contains one Leu-Xaa-Xaa-Leu-Leu (LXXLL) motif, a motif known to be important for the association with nuclear receptors.</text>
</comment>
<comment type="domain">
    <text evidence="1">Contains one Leu-Xaa-Xaa-Ile-Leu (LXXIL) motif, which is essential for the association with nuclear receptors.</text>
</comment>